<sequence length="31" mass="3350">MPTITSYFGFLLAASTITPALLIGLNKIRLI</sequence>
<protein>
    <recommendedName>
        <fullName evidence="1">Cytochrome b6-f complex subunit 6</fullName>
    </recommendedName>
    <alternativeName>
        <fullName evidence="1">Cytochrome b6-f complex subunit PetL</fullName>
    </alternativeName>
    <alternativeName>
        <fullName evidence="1">Cytochrome b6-f complex subunit VI</fullName>
    </alternativeName>
</protein>
<keyword id="KW-0150">Chloroplast</keyword>
<keyword id="KW-0249">Electron transport</keyword>
<keyword id="KW-0472">Membrane</keyword>
<keyword id="KW-0602">Photosynthesis</keyword>
<keyword id="KW-0934">Plastid</keyword>
<keyword id="KW-0793">Thylakoid</keyword>
<keyword id="KW-0812">Transmembrane</keyword>
<keyword id="KW-1133">Transmembrane helix</keyword>
<keyword id="KW-0813">Transport</keyword>
<evidence type="ECO:0000255" key="1">
    <source>
        <dbReference type="HAMAP-Rule" id="MF_00433"/>
    </source>
</evidence>
<comment type="function">
    <text evidence="1">Component of the cytochrome b6-f complex, which mediates electron transfer between photosystem II (PSII) and photosystem I (PSI), cyclic electron flow around PSI, and state transitions. PetL is important for photoautotrophic growth as well as for electron transfer efficiency and stability of the cytochrome b6-f complex.</text>
</comment>
<comment type="subunit">
    <text evidence="1">The 4 large subunits of the cytochrome b6-f complex are cytochrome b6, subunit IV (17 kDa polypeptide, PetD), cytochrome f and the Rieske protein, while the 4 small subunits are PetG, PetL, PetM and PetN. The complex functions as a dimer.</text>
</comment>
<comment type="subcellular location">
    <subcellularLocation>
        <location evidence="1">Plastid</location>
        <location evidence="1">Chloroplast thylakoid membrane</location>
        <topology evidence="1">Single-pass membrane protein</topology>
    </subcellularLocation>
</comment>
<comment type="similarity">
    <text evidence="1">Belongs to the PetL family.</text>
</comment>
<proteinExistence type="inferred from homology"/>
<gene>
    <name evidence="1" type="primary">petL</name>
</gene>
<accession>Q7YJV7</accession>
<organism>
    <name type="scientific">Calycanthus floridus var. glaucus</name>
    <name type="common">Eastern sweetshrub</name>
    <name type="synonym">Calycanthus fertilis var. ferax</name>
    <dbReference type="NCBI Taxonomy" id="212734"/>
    <lineage>
        <taxon>Eukaryota</taxon>
        <taxon>Viridiplantae</taxon>
        <taxon>Streptophyta</taxon>
        <taxon>Embryophyta</taxon>
        <taxon>Tracheophyta</taxon>
        <taxon>Spermatophyta</taxon>
        <taxon>Magnoliopsida</taxon>
        <taxon>Magnoliidae</taxon>
        <taxon>Laurales</taxon>
        <taxon>Calycanthaceae</taxon>
        <taxon>Calycanthus</taxon>
    </lineage>
</organism>
<dbReference type="EMBL" id="AJ428413">
    <property type="protein sequence ID" value="CAD28739.1"/>
    <property type="molecule type" value="Genomic_DNA"/>
</dbReference>
<dbReference type="RefSeq" id="NP_862772.1">
    <property type="nucleotide sequence ID" value="NC_004993.1"/>
</dbReference>
<dbReference type="SMR" id="Q7YJV7"/>
<dbReference type="GeneID" id="2597999"/>
<dbReference type="GO" id="GO:0009535">
    <property type="term" value="C:chloroplast thylakoid membrane"/>
    <property type="evidence" value="ECO:0007669"/>
    <property type="project" value="UniProtKB-SubCell"/>
</dbReference>
<dbReference type="GO" id="GO:0009512">
    <property type="term" value="C:cytochrome b6f complex"/>
    <property type="evidence" value="ECO:0007669"/>
    <property type="project" value="InterPro"/>
</dbReference>
<dbReference type="GO" id="GO:0045158">
    <property type="term" value="F:electron transporter, transferring electrons within cytochrome b6/f complex of photosystem II activity"/>
    <property type="evidence" value="ECO:0007669"/>
    <property type="project" value="UniProtKB-UniRule"/>
</dbReference>
<dbReference type="GO" id="GO:0015979">
    <property type="term" value="P:photosynthesis"/>
    <property type="evidence" value="ECO:0007669"/>
    <property type="project" value="UniProtKB-KW"/>
</dbReference>
<dbReference type="HAMAP" id="MF_00433">
    <property type="entry name" value="Cytb6_f_PetL"/>
    <property type="match status" value="1"/>
</dbReference>
<dbReference type="InterPro" id="IPR007802">
    <property type="entry name" value="Cyt_b6/f_cplx_su6"/>
</dbReference>
<dbReference type="PANTHER" id="PTHR37266">
    <property type="entry name" value="CYTOCHROME B6-F COMPLEX SUBUNIT 6"/>
    <property type="match status" value="1"/>
</dbReference>
<dbReference type="PANTHER" id="PTHR37266:SF1">
    <property type="entry name" value="CYTOCHROME B6-F COMPLEX SUBUNIT 6"/>
    <property type="match status" value="1"/>
</dbReference>
<dbReference type="Pfam" id="PF05115">
    <property type="entry name" value="PetL"/>
    <property type="match status" value="1"/>
</dbReference>
<name>PETL_CALFG</name>
<feature type="chain" id="PRO_0000220440" description="Cytochrome b6-f complex subunit 6">
    <location>
        <begin position="1"/>
        <end position="31"/>
    </location>
</feature>
<feature type="transmembrane region" description="Helical" evidence="1">
    <location>
        <begin position="4"/>
        <end position="26"/>
    </location>
</feature>
<reference key="1">
    <citation type="journal article" date="2003" name="Plant Syst. Evol.">
        <title>The chloroplast genome of the 'basal' angiosperm Calycanthus fertilis -- structural and phylogenetic analyses.</title>
        <authorList>
            <person name="Goremykin V."/>
            <person name="Hirsch-Ernst K.I."/>
            <person name="Woelfl S."/>
            <person name="Hellwig F.H."/>
        </authorList>
    </citation>
    <scope>NUCLEOTIDE SEQUENCE [LARGE SCALE GENOMIC DNA]</scope>
</reference>
<geneLocation type="chloroplast"/>